<keyword id="KW-1003">Cell membrane</keyword>
<keyword id="KW-1015">Disulfide bond</keyword>
<keyword id="KW-0297">G-protein coupled receptor</keyword>
<keyword id="KW-0325">Glycoprotein</keyword>
<keyword id="KW-0472">Membrane</keyword>
<keyword id="KW-0675">Receptor</keyword>
<keyword id="KW-1185">Reference proteome</keyword>
<keyword id="KW-0807">Transducer</keyword>
<keyword id="KW-0812">Transmembrane</keyword>
<keyword id="KW-1133">Transmembrane helix</keyword>
<reference evidence="5 6" key="1">
    <citation type="journal article" date="2005" name="Biochem. J.">
        <title>Novel evolutionary lineages of the invertebrate oxytocin/vasopressin superfamily peptides and their receptors in the common octopus (Octopus vulgaris).</title>
        <authorList>
            <person name="Kanda A."/>
            <person name="Satake H."/>
            <person name="Kawada T."/>
            <person name="Minakata H."/>
        </authorList>
    </citation>
    <scope>NUCLEOTIDE SEQUENCE [GENOMIC DNA / MRNA]</scope>
    <scope>FUNCTION</scope>
    <scope>TISSUE SPECIFICITY</scope>
    <source>
        <tissue evidence="4">Branchia</tissue>
    </source>
</reference>
<evidence type="ECO:0000255" key="1"/>
<evidence type="ECO:0000255" key="2">
    <source>
        <dbReference type="PROSITE-ProRule" id="PRU00521"/>
    </source>
</evidence>
<evidence type="ECO:0000256" key="3">
    <source>
        <dbReference type="SAM" id="MobiDB-lite"/>
    </source>
</evidence>
<evidence type="ECO:0000269" key="4">
    <source>
    </source>
</evidence>
<evidence type="ECO:0000305" key="5"/>
<evidence type="ECO:0000312" key="6">
    <source>
        <dbReference type="EMBL" id="BAD67167.1"/>
    </source>
</evidence>
<dbReference type="EMBL" id="AB112347">
    <property type="protein sequence ID" value="BAD67167.1"/>
    <property type="molecule type" value="mRNA"/>
</dbReference>
<dbReference type="EMBL" id="AB158494">
    <property type="protein sequence ID" value="BAD67170.1"/>
    <property type="molecule type" value="Genomic_DNA"/>
</dbReference>
<dbReference type="EMBL" id="AB158495">
    <property type="protein sequence ID" value="BAD67171.1"/>
    <property type="molecule type" value="Genomic_DNA"/>
</dbReference>
<dbReference type="SMR" id="Q5WA50"/>
<dbReference type="GlyCosmos" id="Q5WA50">
    <property type="glycosylation" value="2 sites, No reported glycans"/>
</dbReference>
<dbReference type="Proteomes" id="UP000515154">
    <property type="component" value="Unplaced"/>
</dbReference>
<dbReference type="GO" id="GO:0016020">
    <property type="term" value="C:membrane"/>
    <property type="evidence" value="ECO:0000305"/>
    <property type="project" value="UniProtKB"/>
</dbReference>
<dbReference type="GO" id="GO:0005886">
    <property type="term" value="C:plasma membrane"/>
    <property type="evidence" value="ECO:0007669"/>
    <property type="project" value="UniProtKB-SubCell"/>
</dbReference>
<dbReference type="GO" id="GO:0042277">
    <property type="term" value="F:peptide binding"/>
    <property type="evidence" value="ECO:0007669"/>
    <property type="project" value="TreeGrafter"/>
</dbReference>
<dbReference type="GO" id="GO:0016500">
    <property type="term" value="F:protein-hormone receptor activity"/>
    <property type="evidence" value="ECO:0000314"/>
    <property type="project" value="UniProtKB"/>
</dbReference>
<dbReference type="GO" id="GO:0005000">
    <property type="term" value="F:vasopressin receptor activity"/>
    <property type="evidence" value="ECO:0007669"/>
    <property type="project" value="InterPro"/>
</dbReference>
<dbReference type="GO" id="GO:0032870">
    <property type="term" value="P:cellular response to hormone stimulus"/>
    <property type="evidence" value="ECO:0007669"/>
    <property type="project" value="TreeGrafter"/>
</dbReference>
<dbReference type="GO" id="GO:0007186">
    <property type="term" value="P:G protein-coupled receptor signaling pathway"/>
    <property type="evidence" value="ECO:0000304"/>
    <property type="project" value="UniProtKB"/>
</dbReference>
<dbReference type="GO" id="GO:0046887">
    <property type="term" value="P:positive regulation of hormone secretion"/>
    <property type="evidence" value="ECO:0000304"/>
    <property type="project" value="UniProtKB"/>
</dbReference>
<dbReference type="CDD" id="cd15196">
    <property type="entry name" value="7tmA_Vasopressin_Oxytocin"/>
    <property type="match status" value="1"/>
</dbReference>
<dbReference type="FunFam" id="1.20.1070.10:FF:001149">
    <property type="entry name" value="Cephalotocin receptor 2"/>
    <property type="match status" value="1"/>
</dbReference>
<dbReference type="Gene3D" id="1.20.1070.10">
    <property type="entry name" value="Rhodopsin 7-helix transmembrane proteins"/>
    <property type="match status" value="1"/>
</dbReference>
<dbReference type="InterPro" id="IPR000276">
    <property type="entry name" value="GPCR_Rhodpsn"/>
</dbReference>
<dbReference type="InterPro" id="IPR017452">
    <property type="entry name" value="GPCR_Rhodpsn_7TM"/>
</dbReference>
<dbReference type="InterPro" id="IPR001817">
    <property type="entry name" value="Vasoprsn_rcpt"/>
</dbReference>
<dbReference type="PANTHER" id="PTHR24241:SF161">
    <property type="entry name" value="G-PROTEIN COUPLED RECEPTORS FAMILY 1 PROFILE DOMAIN-CONTAINING PROTEIN"/>
    <property type="match status" value="1"/>
</dbReference>
<dbReference type="PANTHER" id="PTHR24241">
    <property type="entry name" value="NEUROPEPTIDE RECEPTOR-RELATED G-PROTEIN COUPLED RECEPTOR"/>
    <property type="match status" value="1"/>
</dbReference>
<dbReference type="Pfam" id="PF00001">
    <property type="entry name" value="7tm_1"/>
    <property type="match status" value="1"/>
</dbReference>
<dbReference type="PRINTS" id="PR00237">
    <property type="entry name" value="GPCRRHODOPSN"/>
</dbReference>
<dbReference type="PRINTS" id="PR00896">
    <property type="entry name" value="VASOPRESSINR"/>
</dbReference>
<dbReference type="SUPFAM" id="SSF81321">
    <property type="entry name" value="Family A G protein-coupled receptor-like"/>
    <property type="match status" value="1"/>
</dbReference>
<dbReference type="PROSITE" id="PS00237">
    <property type="entry name" value="G_PROTEIN_RECEP_F1_1"/>
    <property type="match status" value="1"/>
</dbReference>
<dbReference type="PROSITE" id="PS50262">
    <property type="entry name" value="G_PROTEIN_RECEP_F1_2"/>
    <property type="match status" value="1"/>
</dbReference>
<comment type="function">
    <text evidence="4">Acts as a receptor for cephalotocin.</text>
</comment>
<comment type="subcellular location">
    <subcellularLocation>
        <location evidence="5">Cell membrane</location>
        <topology evidence="1">Multi-pass membrane protein</topology>
    </subcellularLocation>
</comment>
<comment type="tissue specificity">
    <text evidence="4">Present in various peripheral tissues with highest expression in branchia and vas deferens. Very low expression detected in nervous system.</text>
</comment>
<comment type="similarity">
    <text evidence="2">Belongs to the G-protein coupled receptor 1 family. Vasopressin/oxytocin receptor subfamily.</text>
</comment>
<proteinExistence type="evidence at transcript level"/>
<name>CTR2_OCTVU</name>
<sequence length="426" mass="49398">MYQAMEVESTSPSGFFLDFYTQSTIPTTDFLNNTNSSHPIRDEKLVKIEIAVLGTCFTLAIINNLCVLLVLLWRRKKVRRMQMFILHLSIADLIVAFFNILPQLIWDITFRFMAGDAMCRFIKYAQMFSLYLSTYILIMTAVDRYRAICHPLSNQTWTPCMVYCKIFIAYAIATIFSIPQAILFQMQEVNEGSGIYDCWVHFEPAWVLTAYALYIFFALYLIPILILFFTYGSICYTIWAKYRHAIKTKKDANTRYPQRRKKKGVILRTHSVHGFSKAKLNSVKLTFAVIVTYIICWSPFFVSQIWWLFDETVVGNAGVVVILLMACLNSCTNPWIYLIFNRNYISNVLPCKCLRRHRVEVAATTETERLSLGSVRRDSRKTSDPKRISESRRISDARRISGKTQKNNSSSPRKTSDQFIYSDKTT</sequence>
<accession>Q5WA50</accession>
<accession>Q5W9T6</accession>
<protein>
    <recommendedName>
        <fullName>Cephalotocin receptor 2</fullName>
    </recommendedName>
</protein>
<gene>
    <name evidence="6" type="primary">CTR2</name>
</gene>
<organism>
    <name type="scientific">Octopus vulgaris</name>
    <name type="common">Common octopus</name>
    <dbReference type="NCBI Taxonomy" id="6645"/>
    <lineage>
        <taxon>Eukaryota</taxon>
        <taxon>Metazoa</taxon>
        <taxon>Spiralia</taxon>
        <taxon>Lophotrochozoa</taxon>
        <taxon>Mollusca</taxon>
        <taxon>Cephalopoda</taxon>
        <taxon>Coleoidea</taxon>
        <taxon>Octopodiformes</taxon>
        <taxon>Octopoda</taxon>
        <taxon>Incirrata</taxon>
        <taxon>Octopodidae</taxon>
        <taxon>Octopus</taxon>
    </lineage>
</organism>
<feature type="chain" id="PRO_0000233902" description="Cephalotocin receptor 2">
    <location>
        <begin position="1"/>
        <end position="426"/>
    </location>
</feature>
<feature type="topological domain" description="Extracellular" evidence="1">
    <location>
        <begin position="1"/>
        <end position="51"/>
    </location>
</feature>
<feature type="transmembrane region" description="Helical; Name=1" evidence="1">
    <location>
        <begin position="52"/>
        <end position="72"/>
    </location>
</feature>
<feature type="topological domain" description="Cytoplasmic" evidence="1">
    <location>
        <begin position="73"/>
        <end position="84"/>
    </location>
</feature>
<feature type="transmembrane region" description="Helical; Name=2" evidence="1">
    <location>
        <begin position="85"/>
        <end position="105"/>
    </location>
</feature>
<feature type="topological domain" description="Extracellular" evidence="1">
    <location>
        <begin position="106"/>
        <end position="120"/>
    </location>
</feature>
<feature type="transmembrane region" description="Helical; Name=3" evidence="1">
    <location>
        <begin position="121"/>
        <end position="141"/>
    </location>
</feature>
<feature type="topological domain" description="Cytoplasmic" evidence="1">
    <location>
        <begin position="142"/>
        <end position="165"/>
    </location>
</feature>
<feature type="transmembrane region" description="Helical; Name=4" evidence="1">
    <location>
        <begin position="166"/>
        <end position="186"/>
    </location>
</feature>
<feature type="topological domain" description="Extracellular" evidence="1">
    <location>
        <begin position="187"/>
        <end position="208"/>
    </location>
</feature>
<feature type="transmembrane region" description="Helical; Name=5" evidence="1">
    <location>
        <begin position="209"/>
        <end position="229"/>
    </location>
</feature>
<feature type="topological domain" description="Cytoplasmic" evidence="1">
    <location>
        <begin position="230"/>
        <end position="288"/>
    </location>
</feature>
<feature type="transmembrane region" description="Helical; Name=6" evidence="1">
    <location>
        <begin position="289"/>
        <end position="309"/>
    </location>
</feature>
<feature type="topological domain" description="Extracellular" evidence="1">
    <location>
        <begin position="310"/>
        <end position="319"/>
    </location>
</feature>
<feature type="transmembrane region" description="Helical; Name=7" evidence="1">
    <location>
        <begin position="320"/>
        <end position="340"/>
    </location>
</feature>
<feature type="topological domain" description="Cytoplasmic" evidence="1">
    <location>
        <begin position="341"/>
        <end position="426"/>
    </location>
</feature>
<feature type="region of interest" description="Disordered" evidence="3">
    <location>
        <begin position="373"/>
        <end position="426"/>
    </location>
</feature>
<feature type="compositionally biased region" description="Basic and acidic residues" evidence="3">
    <location>
        <begin position="375"/>
        <end position="399"/>
    </location>
</feature>
<feature type="compositionally biased region" description="Polar residues" evidence="3">
    <location>
        <begin position="402"/>
        <end position="426"/>
    </location>
</feature>
<feature type="glycosylation site" description="N-linked (GlcNAc...) asparagine" evidence="1">
    <location>
        <position position="32"/>
    </location>
</feature>
<feature type="glycosylation site" description="N-linked (GlcNAc...) asparagine" evidence="1">
    <location>
        <position position="35"/>
    </location>
</feature>
<feature type="disulfide bond" evidence="2">
    <location>
        <begin position="119"/>
        <end position="198"/>
    </location>
</feature>